<keyword id="KW-0067">ATP-binding</keyword>
<keyword id="KW-0436">Ligase</keyword>
<keyword id="KW-0460">Magnesium</keyword>
<keyword id="KW-0479">Metal-binding</keyword>
<keyword id="KW-0547">Nucleotide-binding</keyword>
<keyword id="KW-0816">Tricarboxylic acid cycle</keyword>
<dbReference type="EC" id="6.2.1.5" evidence="1"/>
<dbReference type="EMBL" id="CP001364">
    <property type="protein sequence ID" value="ACM52648.1"/>
    <property type="molecule type" value="Genomic_DNA"/>
</dbReference>
<dbReference type="SMR" id="B9LB77"/>
<dbReference type="KEGG" id="chl:Chy400_1227"/>
<dbReference type="HOGENOM" id="CLU_037430_0_2_0"/>
<dbReference type="OrthoDB" id="9802602at2"/>
<dbReference type="UniPathway" id="UPA00223">
    <property type="reaction ID" value="UER00999"/>
</dbReference>
<dbReference type="GO" id="GO:0005829">
    <property type="term" value="C:cytosol"/>
    <property type="evidence" value="ECO:0007669"/>
    <property type="project" value="TreeGrafter"/>
</dbReference>
<dbReference type="GO" id="GO:0042709">
    <property type="term" value="C:succinate-CoA ligase complex"/>
    <property type="evidence" value="ECO:0007669"/>
    <property type="project" value="TreeGrafter"/>
</dbReference>
<dbReference type="GO" id="GO:0005524">
    <property type="term" value="F:ATP binding"/>
    <property type="evidence" value="ECO:0007669"/>
    <property type="project" value="UniProtKB-UniRule"/>
</dbReference>
<dbReference type="GO" id="GO:0000287">
    <property type="term" value="F:magnesium ion binding"/>
    <property type="evidence" value="ECO:0007669"/>
    <property type="project" value="UniProtKB-UniRule"/>
</dbReference>
<dbReference type="GO" id="GO:0004775">
    <property type="term" value="F:succinate-CoA ligase (ADP-forming) activity"/>
    <property type="evidence" value="ECO:0007669"/>
    <property type="project" value="UniProtKB-UniRule"/>
</dbReference>
<dbReference type="GO" id="GO:0004776">
    <property type="term" value="F:succinate-CoA ligase (GDP-forming) activity"/>
    <property type="evidence" value="ECO:0007669"/>
    <property type="project" value="RHEA"/>
</dbReference>
<dbReference type="GO" id="GO:0006104">
    <property type="term" value="P:succinyl-CoA metabolic process"/>
    <property type="evidence" value="ECO:0007669"/>
    <property type="project" value="TreeGrafter"/>
</dbReference>
<dbReference type="GO" id="GO:0006099">
    <property type="term" value="P:tricarboxylic acid cycle"/>
    <property type="evidence" value="ECO:0007669"/>
    <property type="project" value="UniProtKB-UniRule"/>
</dbReference>
<dbReference type="FunFam" id="3.30.1490.20:FF:000014">
    <property type="entry name" value="Succinate--CoA ligase [ADP-forming] subunit beta"/>
    <property type="match status" value="1"/>
</dbReference>
<dbReference type="FunFam" id="3.30.470.20:FF:000002">
    <property type="entry name" value="Succinate--CoA ligase [ADP-forming] subunit beta"/>
    <property type="match status" value="1"/>
</dbReference>
<dbReference type="FunFam" id="3.40.50.261:FF:000001">
    <property type="entry name" value="Succinate--CoA ligase [ADP-forming] subunit beta"/>
    <property type="match status" value="1"/>
</dbReference>
<dbReference type="Gene3D" id="3.30.1490.20">
    <property type="entry name" value="ATP-grasp fold, A domain"/>
    <property type="match status" value="1"/>
</dbReference>
<dbReference type="Gene3D" id="3.30.470.20">
    <property type="entry name" value="ATP-grasp fold, B domain"/>
    <property type="match status" value="1"/>
</dbReference>
<dbReference type="Gene3D" id="3.40.50.261">
    <property type="entry name" value="Succinyl-CoA synthetase domains"/>
    <property type="match status" value="1"/>
</dbReference>
<dbReference type="HAMAP" id="MF_00558">
    <property type="entry name" value="Succ_CoA_beta"/>
    <property type="match status" value="1"/>
</dbReference>
<dbReference type="InterPro" id="IPR011761">
    <property type="entry name" value="ATP-grasp"/>
</dbReference>
<dbReference type="InterPro" id="IPR013650">
    <property type="entry name" value="ATP-grasp_succ-CoA_synth-type"/>
</dbReference>
<dbReference type="InterPro" id="IPR013815">
    <property type="entry name" value="ATP_grasp_subdomain_1"/>
</dbReference>
<dbReference type="InterPro" id="IPR017866">
    <property type="entry name" value="Succ-CoA_synthase_bsu_CS"/>
</dbReference>
<dbReference type="InterPro" id="IPR005811">
    <property type="entry name" value="SUCC_ACL_C"/>
</dbReference>
<dbReference type="InterPro" id="IPR005809">
    <property type="entry name" value="Succ_CoA_ligase-like_bsu"/>
</dbReference>
<dbReference type="InterPro" id="IPR016102">
    <property type="entry name" value="Succinyl-CoA_synth-like"/>
</dbReference>
<dbReference type="NCBIfam" id="NF001913">
    <property type="entry name" value="PRK00696.1"/>
    <property type="match status" value="1"/>
</dbReference>
<dbReference type="NCBIfam" id="TIGR01016">
    <property type="entry name" value="sucCoAbeta"/>
    <property type="match status" value="1"/>
</dbReference>
<dbReference type="PANTHER" id="PTHR11815:SF10">
    <property type="entry name" value="SUCCINATE--COA LIGASE [GDP-FORMING] SUBUNIT BETA, MITOCHONDRIAL"/>
    <property type="match status" value="1"/>
</dbReference>
<dbReference type="PANTHER" id="PTHR11815">
    <property type="entry name" value="SUCCINYL-COA SYNTHETASE BETA CHAIN"/>
    <property type="match status" value="1"/>
</dbReference>
<dbReference type="Pfam" id="PF08442">
    <property type="entry name" value="ATP-grasp_2"/>
    <property type="match status" value="1"/>
</dbReference>
<dbReference type="Pfam" id="PF00549">
    <property type="entry name" value="Ligase_CoA"/>
    <property type="match status" value="1"/>
</dbReference>
<dbReference type="PIRSF" id="PIRSF001554">
    <property type="entry name" value="SucCS_beta"/>
    <property type="match status" value="1"/>
</dbReference>
<dbReference type="SUPFAM" id="SSF56059">
    <property type="entry name" value="Glutathione synthetase ATP-binding domain-like"/>
    <property type="match status" value="1"/>
</dbReference>
<dbReference type="SUPFAM" id="SSF52210">
    <property type="entry name" value="Succinyl-CoA synthetase domains"/>
    <property type="match status" value="1"/>
</dbReference>
<dbReference type="PROSITE" id="PS50975">
    <property type="entry name" value="ATP_GRASP"/>
    <property type="match status" value="1"/>
</dbReference>
<dbReference type="PROSITE" id="PS01217">
    <property type="entry name" value="SUCCINYL_COA_LIG_3"/>
    <property type="match status" value="1"/>
</dbReference>
<gene>
    <name evidence="1" type="primary">sucC</name>
    <name type="ordered locus">Chy400_1227</name>
</gene>
<feature type="chain" id="PRO_1000197702" description="Succinate--CoA ligase [ADP-forming] subunit beta">
    <location>
        <begin position="1"/>
        <end position="380"/>
    </location>
</feature>
<feature type="domain" description="ATP-grasp" evidence="1">
    <location>
        <begin position="9"/>
        <end position="237"/>
    </location>
</feature>
<feature type="binding site" evidence="1">
    <location>
        <position position="45"/>
    </location>
    <ligand>
        <name>ATP</name>
        <dbReference type="ChEBI" id="CHEBI:30616"/>
    </ligand>
</feature>
<feature type="binding site" evidence="1">
    <location>
        <begin position="52"/>
        <end position="54"/>
    </location>
    <ligand>
        <name>ATP</name>
        <dbReference type="ChEBI" id="CHEBI:30616"/>
    </ligand>
</feature>
<feature type="binding site" evidence="1">
    <location>
        <position position="94"/>
    </location>
    <ligand>
        <name>ATP</name>
        <dbReference type="ChEBI" id="CHEBI:30616"/>
    </ligand>
</feature>
<feature type="binding site" evidence="1">
    <location>
        <position position="99"/>
    </location>
    <ligand>
        <name>ATP</name>
        <dbReference type="ChEBI" id="CHEBI:30616"/>
    </ligand>
</feature>
<feature type="binding site" evidence="1">
    <location>
        <position position="192"/>
    </location>
    <ligand>
        <name>Mg(2+)</name>
        <dbReference type="ChEBI" id="CHEBI:18420"/>
    </ligand>
</feature>
<feature type="binding site" evidence="1">
    <location>
        <position position="206"/>
    </location>
    <ligand>
        <name>Mg(2+)</name>
        <dbReference type="ChEBI" id="CHEBI:18420"/>
    </ligand>
</feature>
<feature type="binding site" evidence="1">
    <location>
        <position position="257"/>
    </location>
    <ligand>
        <name>substrate</name>
        <note>ligand shared with subunit alpha</note>
    </ligand>
</feature>
<feature type="binding site" evidence="1">
    <location>
        <begin position="314"/>
        <end position="316"/>
    </location>
    <ligand>
        <name>substrate</name>
        <note>ligand shared with subunit alpha</note>
    </ligand>
</feature>
<protein>
    <recommendedName>
        <fullName evidence="1">Succinate--CoA ligase [ADP-forming] subunit beta</fullName>
        <ecNumber evidence="1">6.2.1.5</ecNumber>
    </recommendedName>
    <alternativeName>
        <fullName evidence="1">Succinyl-CoA synthetase subunit beta</fullName>
        <shortName evidence="1">SCS-beta</shortName>
    </alternativeName>
</protein>
<organism>
    <name type="scientific">Chloroflexus aurantiacus (strain ATCC 29364 / DSM 637 / Y-400-fl)</name>
    <dbReference type="NCBI Taxonomy" id="480224"/>
    <lineage>
        <taxon>Bacteria</taxon>
        <taxon>Bacillati</taxon>
        <taxon>Chloroflexota</taxon>
        <taxon>Chloroflexia</taxon>
        <taxon>Chloroflexales</taxon>
        <taxon>Chloroflexineae</taxon>
        <taxon>Chloroflexaceae</taxon>
        <taxon>Chloroflexus</taxon>
    </lineage>
</organism>
<accession>B9LB77</accession>
<reference key="1">
    <citation type="submission" date="2009-01" db="EMBL/GenBank/DDBJ databases">
        <title>Complete sequence of Chloroflexus sp. Y-400-fl.</title>
        <authorList>
            <consortium name="US DOE Joint Genome Institute"/>
            <person name="Lucas S."/>
            <person name="Copeland A."/>
            <person name="Lapidus A."/>
            <person name="Glavina del Rio T."/>
            <person name="Dalin E."/>
            <person name="Tice H."/>
            <person name="Bruce D."/>
            <person name="Goodwin L."/>
            <person name="Pitluck S."/>
            <person name="Sims D."/>
            <person name="Kiss H."/>
            <person name="Brettin T."/>
            <person name="Detter J.C."/>
            <person name="Han C."/>
            <person name="Larimer F."/>
            <person name="Land M."/>
            <person name="Hauser L."/>
            <person name="Kyrpides N."/>
            <person name="Ovchinnikova G."/>
            <person name="Bryant D.A."/>
            <person name="Richardson P."/>
        </authorList>
    </citation>
    <scope>NUCLEOTIDE SEQUENCE [LARGE SCALE GENOMIC DNA]</scope>
    <source>
        <strain>ATCC 29364 / DSM 637 / Y-400-fl</strain>
    </source>
</reference>
<name>SUCC_CHLSY</name>
<sequence length="380" mass="39885">MKLHEYQARDLLARFGIPVTGGGVAVTPVEARTIAAEIGGPVVVKAQVHVGGRGKAGGVKLAQTPTEAEQVARQILGMNIKGLTVEKVLVAEAVSYKRELYLSAILDRGSKRVMMIASAEGGVEIEEVAKTNPDAIIKIPAHPTMGLLDFQARELAFRIGLNDGKQARQFAQIASALYRAFVECDASLVEINPLVVKADGSLLALDSKILLDESALFRHPDLAALHDPSAEPEAERRAREAGITYIKLDGNIGCMVNGAGLAMATMDVIKLSGGEPANFLDIGGGAGKEKVKAALQIILSDPNVKAVLFNIFGGITRVDEVARGIIAALEEVPTDVPMVARLVGTNEEAGRALLAESKLIPAATLAEGAQKAVAAARGEL</sequence>
<evidence type="ECO:0000255" key="1">
    <source>
        <dbReference type="HAMAP-Rule" id="MF_00558"/>
    </source>
</evidence>
<comment type="function">
    <text evidence="1">Succinyl-CoA synthetase functions in the citric acid cycle (TCA), coupling the hydrolysis of succinyl-CoA to the synthesis of either ATP or GTP and thus represents the only step of substrate-level phosphorylation in the TCA. The beta subunit provides nucleotide specificity of the enzyme and binds the substrate succinate, while the binding sites for coenzyme A and phosphate are found in the alpha subunit.</text>
</comment>
<comment type="catalytic activity">
    <reaction evidence="1">
        <text>succinate + ATP + CoA = succinyl-CoA + ADP + phosphate</text>
        <dbReference type="Rhea" id="RHEA:17661"/>
        <dbReference type="ChEBI" id="CHEBI:30031"/>
        <dbReference type="ChEBI" id="CHEBI:30616"/>
        <dbReference type="ChEBI" id="CHEBI:43474"/>
        <dbReference type="ChEBI" id="CHEBI:57287"/>
        <dbReference type="ChEBI" id="CHEBI:57292"/>
        <dbReference type="ChEBI" id="CHEBI:456216"/>
        <dbReference type="EC" id="6.2.1.5"/>
    </reaction>
    <physiologicalReaction direction="right-to-left" evidence="1">
        <dbReference type="Rhea" id="RHEA:17663"/>
    </physiologicalReaction>
</comment>
<comment type="catalytic activity">
    <reaction evidence="1">
        <text>GTP + succinate + CoA = succinyl-CoA + GDP + phosphate</text>
        <dbReference type="Rhea" id="RHEA:22120"/>
        <dbReference type="ChEBI" id="CHEBI:30031"/>
        <dbReference type="ChEBI" id="CHEBI:37565"/>
        <dbReference type="ChEBI" id="CHEBI:43474"/>
        <dbReference type="ChEBI" id="CHEBI:57287"/>
        <dbReference type="ChEBI" id="CHEBI:57292"/>
        <dbReference type="ChEBI" id="CHEBI:58189"/>
    </reaction>
    <physiologicalReaction direction="right-to-left" evidence="1">
        <dbReference type="Rhea" id="RHEA:22122"/>
    </physiologicalReaction>
</comment>
<comment type="cofactor">
    <cofactor evidence="1">
        <name>Mg(2+)</name>
        <dbReference type="ChEBI" id="CHEBI:18420"/>
    </cofactor>
    <text evidence="1">Binds 1 Mg(2+) ion per subunit.</text>
</comment>
<comment type="pathway">
    <text evidence="1">Carbohydrate metabolism; tricarboxylic acid cycle; succinate from succinyl-CoA (ligase route): step 1/1.</text>
</comment>
<comment type="subunit">
    <text evidence="1">Heterotetramer of two alpha and two beta subunits.</text>
</comment>
<comment type="similarity">
    <text evidence="1">Belongs to the succinate/malate CoA ligase beta subunit family.</text>
</comment>
<proteinExistence type="inferred from homology"/>